<proteinExistence type="inferred from homology"/>
<keyword id="KW-0998">Cell outer membrane</keyword>
<keyword id="KW-0472">Membrane</keyword>
<keyword id="KW-0677">Repeat</keyword>
<keyword id="KW-0732">Signal</keyword>
<keyword id="KW-0812">Transmembrane</keyword>
<keyword id="KW-1134">Transmembrane beta strand</keyword>
<sequence>MVWLLFLSSFCFADEVVEIRISGNKRVSETTVRGLLHVEVGQDVASDELNAVFKRLTASRLFSSVELDLTAGILEVKLQENPILRNVVVKGNKLLSRAAIDKILVYKKDAIFDVHEFENSITALKSYYRDSVVEKTAISYRIVPIDENNVDVEVTVKEAKPTVIRAIEFEGNTTYSDRVLKHVIRSREKSILRLFGTAHYYSREKLEFDKDLLADFYQGKGYFDYALEGLEERENEDGVVLVFKLKEGARYSFGRVSVVSEKGEIEISDLKEKVRIREGAVFNIGAVRENALTLLSVLNERGHMFVNVVPEYHPDANGRVDLTYHVVSTKKYRIRKINISGNTRTKDTVIRREMLLSENDLYQPSKVADSRRRILNLGFFDEVYIEEHKIDGQNLILEVRVKERPTGTLNLSGGYGSDVGFFGNFSFVENNLFGTSDRLVVELQKASLGSNYSMEFQRKRIFDTFITAGASVFYKNRNEKANGLYKFSSVGGDGSVSYSLRDDLRLHLGYSLSFDKIFDVEGDAPESVKSSAGTKILSAVSYSLFLNKLDNYFVPRYGYGVRFGNKFAGIGGDVKFLRSDFKAGGFVSVFDQSAVLSLIVRAGNIFGYSGQGVDVANRFFLNEMRGFDNLGIGPRDVETDDALGGNFFILGTAEVQVPMRLPVELDLKAAFFYEVGTLTGVDVTTEKVYDSHALRSSVGAGLVWNSPFGVLRVDVAKALVEGKGDKVKTVKFGIVSPF</sequence>
<reference key="1">
    <citation type="journal article" date="2009" name="Nucleic Acids Res.">
        <title>Analysis of complete genome sequence of Neorickettsia risticii: causative agent of Potomac horse fever.</title>
        <authorList>
            <person name="Lin M."/>
            <person name="Zhang C."/>
            <person name="Gibson K."/>
            <person name="Rikihisa Y."/>
        </authorList>
    </citation>
    <scope>NUCLEOTIDE SEQUENCE [LARGE SCALE GENOMIC DNA]</scope>
    <source>
        <strain>Illinois</strain>
    </source>
</reference>
<evidence type="ECO:0000255" key="1">
    <source>
        <dbReference type="HAMAP-Rule" id="MF_01430"/>
    </source>
</evidence>
<evidence type="ECO:0000255" key="2">
    <source>
        <dbReference type="PROSITE-ProRule" id="PRU01115"/>
    </source>
</evidence>
<feature type="signal peptide" evidence="1">
    <location>
        <begin position="1"/>
        <end position="13"/>
    </location>
</feature>
<feature type="chain" id="PRO_0000417616" description="Outer membrane protein assembly factor BamA">
    <location>
        <begin position="14"/>
        <end position="738"/>
    </location>
</feature>
<feature type="domain" description="POTRA 1" evidence="2">
    <location>
        <begin position="14"/>
        <end position="81"/>
    </location>
</feature>
<feature type="domain" description="POTRA 2" evidence="2">
    <location>
        <begin position="82"/>
        <end position="159"/>
    </location>
</feature>
<feature type="domain" description="POTRA 3" evidence="2">
    <location>
        <begin position="162"/>
        <end position="248"/>
    </location>
</feature>
<feature type="domain" description="POTRA 4" evidence="2">
    <location>
        <begin position="251"/>
        <end position="329"/>
    </location>
</feature>
<feature type="domain" description="POTRA 5" evidence="2">
    <location>
        <begin position="332"/>
        <end position="404"/>
    </location>
</feature>
<gene>
    <name evidence="1" type="primary">bamA</name>
    <name type="ordered locus">NRI_0695</name>
</gene>
<accession>C6V5K2</accession>
<dbReference type="EMBL" id="CP001431">
    <property type="protein sequence ID" value="ACT69676.1"/>
    <property type="molecule type" value="Genomic_DNA"/>
</dbReference>
<dbReference type="SMR" id="C6V5K2"/>
<dbReference type="STRING" id="434131.NRI_0695"/>
<dbReference type="KEGG" id="nri:NRI_0695"/>
<dbReference type="eggNOG" id="COG4775">
    <property type="taxonomic scope" value="Bacteria"/>
</dbReference>
<dbReference type="HOGENOM" id="CLU_007664_1_1_5"/>
<dbReference type="OrthoDB" id="9803054at2"/>
<dbReference type="Proteomes" id="UP000001627">
    <property type="component" value="Chromosome"/>
</dbReference>
<dbReference type="GO" id="GO:0009279">
    <property type="term" value="C:cell outer membrane"/>
    <property type="evidence" value="ECO:0007669"/>
    <property type="project" value="UniProtKB-SubCell"/>
</dbReference>
<dbReference type="GO" id="GO:0043165">
    <property type="term" value="P:Gram-negative-bacterium-type cell outer membrane assembly"/>
    <property type="evidence" value="ECO:0007669"/>
    <property type="project" value="UniProtKB-UniRule"/>
</dbReference>
<dbReference type="GO" id="GO:0051205">
    <property type="term" value="P:protein insertion into membrane"/>
    <property type="evidence" value="ECO:0007669"/>
    <property type="project" value="UniProtKB-UniRule"/>
</dbReference>
<dbReference type="Gene3D" id="3.10.20.310">
    <property type="entry name" value="membrane protein fhac"/>
    <property type="match status" value="5"/>
</dbReference>
<dbReference type="Gene3D" id="2.40.160.50">
    <property type="entry name" value="membrane protein fhac: a member of the omp85/tpsb transporter family"/>
    <property type="match status" value="1"/>
</dbReference>
<dbReference type="HAMAP" id="MF_01430">
    <property type="entry name" value="OM_assembly_BamA"/>
    <property type="match status" value="1"/>
</dbReference>
<dbReference type="InterPro" id="IPR000184">
    <property type="entry name" value="Bac_surfAg_D15"/>
</dbReference>
<dbReference type="InterPro" id="IPR010827">
    <property type="entry name" value="BamA/TamA_POTRA"/>
</dbReference>
<dbReference type="InterPro" id="IPR039910">
    <property type="entry name" value="D15-like"/>
</dbReference>
<dbReference type="InterPro" id="IPR023707">
    <property type="entry name" value="OM_assembly_BamA"/>
</dbReference>
<dbReference type="InterPro" id="IPR034746">
    <property type="entry name" value="POTRA"/>
</dbReference>
<dbReference type="NCBIfam" id="TIGR03303">
    <property type="entry name" value="OM_YaeT"/>
    <property type="match status" value="1"/>
</dbReference>
<dbReference type="PANTHER" id="PTHR12815">
    <property type="entry name" value="SORTING AND ASSEMBLY MACHINERY SAMM50 PROTEIN FAMILY MEMBER"/>
    <property type="match status" value="1"/>
</dbReference>
<dbReference type="PANTHER" id="PTHR12815:SF47">
    <property type="entry name" value="TRANSLOCATION AND ASSEMBLY MODULE SUBUNIT TAMA"/>
    <property type="match status" value="1"/>
</dbReference>
<dbReference type="Pfam" id="PF01103">
    <property type="entry name" value="Omp85"/>
    <property type="match status" value="1"/>
</dbReference>
<dbReference type="Pfam" id="PF07244">
    <property type="entry name" value="POTRA"/>
    <property type="match status" value="4"/>
</dbReference>
<dbReference type="PIRSF" id="PIRSF006076">
    <property type="entry name" value="OM_assembly_OMP85"/>
    <property type="match status" value="1"/>
</dbReference>
<dbReference type="PROSITE" id="PS51779">
    <property type="entry name" value="POTRA"/>
    <property type="match status" value="5"/>
</dbReference>
<name>BAMA_NEORI</name>
<protein>
    <recommendedName>
        <fullName evidence="1">Outer membrane protein assembly factor BamA</fullName>
    </recommendedName>
</protein>
<organism>
    <name type="scientific">Neorickettsia risticii (strain Illinois)</name>
    <dbReference type="NCBI Taxonomy" id="434131"/>
    <lineage>
        <taxon>Bacteria</taxon>
        <taxon>Pseudomonadati</taxon>
        <taxon>Pseudomonadota</taxon>
        <taxon>Alphaproteobacteria</taxon>
        <taxon>Rickettsiales</taxon>
        <taxon>Anaplasmataceae</taxon>
        <taxon>Neorickettsia</taxon>
    </lineage>
</organism>
<comment type="function">
    <text evidence="1">Part of the outer membrane protein assembly complex, which is involved in assembly and insertion of beta-barrel proteins into the outer membrane.</text>
</comment>
<comment type="subunit">
    <text evidence="1">Part of the Bam complex.</text>
</comment>
<comment type="subcellular location">
    <subcellularLocation>
        <location evidence="1">Cell outer membrane</location>
    </subcellularLocation>
</comment>
<comment type="similarity">
    <text evidence="1">Belongs to the BamA family.</text>
</comment>